<evidence type="ECO:0000255" key="1">
    <source>
        <dbReference type="HAMAP-Rule" id="MF_01866"/>
    </source>
</evidence>
<feature type="chain" id="PRO_0000375270" description="YcgL domain-containing protein ABSDF1923">
    <location>
        <begin position="1"/>
        <end position="101"/>
    </location>
</feature>
<feature type="domain" description="YcgL" evidence="1">
    <location>
        <begin position="1"/>
        <end position="92"/>
    </location>
</feature>
<sequence length="101" mass="11473">MHCDIYRSSKKDEMYIYIARPNYPDETEQADPFEKVPEAVLQAFGRATFVMHLELAPTRKLARVNVLHVLDSLQTKGFFIQMPPEGLINPNAVEPEGLRGA</sequence>
<accession>B0VPM5</accession>
<name>Y1923_ACIBS</name>
<reference key="1">
    <citation type="journal article" date="2008" name="PLoS ONE">
        <title>Comparative analysis of Acinetobacters: three genomes for three lifestyles.</title>
        <authorList>
            <person name="Vallenet D."/>
            <person name="Nordmann P."/>
            <person name="Barbe V."/>
            <person name="Poirel L."/>
            <person name="Mangenot S."/>
            <person name="Bataille E."/>
            <person name="Dossat C."/>
            <person name="Gas S."/>
            <person name="Kreimeyer A."/>
            <person name="Lenoble P."/>
            <person name="Oztas S."/>
            <person name="Poulain J."/>
            <person name="Segurens B."/>
            <person name="Robert C."/>
            <person name="Abergel C."/>
            <person name="Claverie J.-M."/>
            <person name="Raoult D."/>
            <person name="Medigue C."/>
            <person name="Weissenbach J."/>
            <person name="Cruveiller S."/>
        </authorList>
    </citation>
    <scope>NUCLEOTIDE SEQUENCE [LARGE SCALE GENOMIC DNA]</scope>
    <source>
        <strain>SDF</strain>
    </source>
</reference>
<proteinExistence type="inferred from homology"/>
<gene>
    <name type="ordered locus">ABSDF1923</name>
</gene>
<dbReference type="EMBL" id="CU468230">
    <property type="protein sequence ID" value="CAP01258.1"/>
    <property type="molecule type" value="Genomic_DNA"/>
</dbReference>
<dbReference type="SMR" id="B0VPM5"/>
<dbReference type="KEGG" id="abm:ABSDF1923"/>
<dbReference type="HOGENOM" id="CLU_155118_0_1_6"/>
<dbReference type="BioCyc" id="ABAU509170:GCL9-1579-MONOMER"/>
<dbReference type="Proteomes" id="UP000001741">
    <property type="component" value="Chromosome"/>
</dbReference>
<dbReference type="Gene3D" id="3.10.510.20">
    <property type="entry name" value="YcgL domain"/>
    <property type="match status" value="1"/>
</dbReference>
<dbReference type="HAMAP" id="MF_01866">
    <property type="entry name" value="UPF0745"/>
    <property type="match status" value="1"/>
</dbReference>
<dbReference type="InterPro" id="IPR038068">
    <property type="entry name" value="YcgL-like_sf"/>
</dbReference>
<dbReference type="InterPro" id="IPR027354">
    <property type="entry name" value="YcgL_dom"/>
</dbReference>
<dbReference type="PANTHER" id="PTHR38109">
    <property type="entry name" value="PROTEIN YCGL"/>
    <property type="match status" value="1"/>
</dbReference>
<dbReference type="PANTHER" id="PTHR38109:SF1">
    <property type="entry name" value="PROTEIN YCGL"/>
    <property type="match status" value="1"/>
</dbReference>
<dbReference type="Pfam" id="PF05166">
    <property type="entry name" value="YcgL"/>
    <property type="match status" value="1"/>
</dbReference>
<dbReference type="SUPFAM" id="SSF160191">
    <property type="entry name" value="YcgL-like"/>
    <property type="match status" value="1"/>
</dbReference>
<dbReference type="PROSITE" id="PS51648">
    <property type="entry name" value="YCGL"/>
    <property type="match status" value="1"/>
</dbReference>
<protein>
    <recommendedName>
        <fullName evidence="1">YcgL domain-containing protein ABSDF1923</fullName>
    </recommendedName>
</protein>
<organism>
    <name type="scientific">Acinetobacter baumannii (strain SDF)</name>
    <dbReference type="NCBI Taxonomy" id="509170"/>
    <lineage>
        <taxon>Bacteria</taxon>
        <taxon>Pseudomonadati</taxon>
        <taxon>Pseudomonadota</taxon>
        <taxon>Gammaproteobacteria</taxon>
        <taxon>Moraxellales</taxon>
        <taxon>Moraxellaceae</taxon>
        <taxon>Acinetobacter</taxon>
        <taxon>Acinetobacter calcoaceticus/baumannii complex</taxon>
    </lineage>
</organism>